<evidence type="ECO:0000250" key="1"/>
<evidence type="ECO:0000255" key="2"/>
<evidence type="ECO:0000255" key="3">
    <source>
        <dbReference type="PROSITE-ProRule" id="PRU10013"/>
    </source>
</evidence>
<evidence type="ECO:0000269" key="4">
    <source>
    </source>
</evidence>
<evidence type="ECO:0000305" key="5"/>
<evidence type="ECO:0007829" key="6">
    <source>
        <dbReference type="PDB" id="3EJ6"/>
    </source>
</evidence>
<evidence type="ECO:0007829" key="7">
    <source>
        <dbReference type="PDB" id="3ZJ4"/>
    </source>
</evidence>
<evidence type="ECO:0007829" key="8">
    <source>
        <dbReference type="PDB" id="3ZJ5"/>
    </source>
</evidence>
<evidence type="ECO:0007829" key="9">
    <source>
        <dbReference type="PDB" id="4AJ9"/>
    </source>
</evidence>
<evidence type="ECO:0007829" key="10">
    <source>
        <dbReference type="PDB" id="4BIM"/>
    </source>
</evidence>
<evidence type="ECO:0007829" key="11">
    <source>
        <dbReference type="PDB" id="6NSW"/>
    </source>
</evidence>
<sequence length="719" mass="79228">MRVNALLPLSGLIGTALAACPFADPSALGRRAEGGEVDARQRLKEVEVDDNGQFMTTDFGGNIEEQFSLKAGGRGSTLLEDFIFRQKLQHFDHERIPERVVHARGAGAHGIFTSYGDWSNITAASFLGAKDKQTPVFVRFSTVAGSRGSADTARDVHGFATRFYTDEGNFDIVGNNIPVFFIQDAIRFPDLIHSVKPSPDNEVPQAATAHDSAWDFFSSQPSALHTLFWAMSGNGIPRSYRHMDGFGIHTFRLVTEDGKSKLVKWHWKTKQGKAALVWEEAQVLAGKNADFHRQDLWDAIESGNAPSWELAVQLIDEDKAQAYGFDLLDPTKFLPEEFAPLQVLGEMTLNRNPMNYFAETEQISFQPGHIVRGVDFTEDPLLQGRLYSYLDTQLNRHRGPNFEQLPINRPVSGVHNNHRDGQGQAWIHKNIHHYSPSYLNKGYPAQANQTVGRGFFTTPGRTASGVLNRELSATFDDHYTQPRLFFNSLTPVEQQFVINAIRFEASHVTNEQVKKNVLEQLNKISNDVAKRVAVALGLEAPQPDPTYYHNNVTRGVSIFNESLPTIATLRVGVLSTTKGGSLDKAKALKEQLEKDGLKVTVIAEYLASGVDQTYSAADATAFDAVVVAEGAERVFSGKGAMSPLFPAGRPSQILTDGYRWGKPVAAVGSAKKALQSIGVEEKEAGVYAGAQDEVIKGVEEGLKVFKFLERFAVDGDDEE</sequence>
<organism>
    <name type="scientific">Neurospora crassa (strain ATCC 24698 / 74-OR23-1A / CBS 708.71 / DSM 1257 / FGSC 987)</name>
    <dbReference type="NCBI Taxonomy" id="367110"/>
    <lineage>
        <taxon>Eukaryota</taxon>
        <taxon>Fungi</taxon>
        <taxon>Dikarya</taxon>
        <taxon>Ascomycota</taxon>
        <taxon>Pezizomycotina</taxon>
        <taxon>Sordariomycetes</taxon>
        <taxon>Sordariomycetidae</taxon>
        <taxon>Sordariales</taxon>
        <taxon>Sordariaceae</taxon>
        <taxon>Neurospora</taxon>
    </lineage>
</organism>
<proteinExistence type="evidence at protein level"/>
<gene>
    <name type="primary">cat-3</name>
    <name type="ORF">NCU00355</name>
</gene>
<keyword id="KW-0002">3D-structure</keyword>
<keyword id="KW-0903">Direct protein sequencing</keyword>
<keyword id="KW-0349">Heme</keyword>
<keyword id="KW-0376">Hydrogen peroxide</keyword>
<keyword id="KW-0408">Iron</keyword>
<keyword id="KW-0479">Metal-binding</keyword>
<keyword id="KW-0560">Oxidoreductase</keyword>
<keyword id="KW-0575">Peroxidase</keyword>
<keyword id="KW-1185">Reference proteome</keyword>
<keyword id="KW-0732">Signal</keyword>
<dbReference type="EC" id="1.11.1.6"/>
<dbReference type="EMBL" id="AY027544">
    <property type="protein sequence ID" value="AAK15807.1"/>
    <property type="molecule type" value="Genomic_DNA"/>
</dbReference>
<dbReference type="EMBL" id="CM002238">
    <property type="protein sequence ID" value="EAA28590.1"/>
    <property type="molecule type" value="Genomic_DNA"/>
</dbReference>
<dbReference type="RefSeq" id="XP_957826.1">
    <property type="nucleotide sequence ID" value="XM_952733.3"/>
</dbReference>
<dbReference type="PDB" id="3EJ6">
    <property type="method" value="X-ray"/>
    <property type="resolution" value="2.30 A"/>
    <property type="chains" value="A/B/C/D=32-719"/>
</dbReference>
<dbReference type="PDB" id="3ZJ4">
    <property type="method" value="X-ray"/>
    <property type="resolution" value="3.10 A"/>
    <property type="chains" value="A/B/C/D=1-719"/>
</dbReference>
<dbReference type="PDB" id="3ZJ5">
    <property type="method" value="X-ray"/>
    <property type="resolution" value="1.95 A"/>
    <property type="chains" value="A/B/C/D=1-719"/>
</dbReference>
<dbReference type="PDB" id="4AJ9">
    <property type="method" value="X-ray"/>
    <property type="resolution" value="1.85 A"/>
    <property type="chains" value="A/B/C/D=38-719"/>
</dbReference>
<dbReference type="PDB" id="4BIM">
    <property type="method" value="X-ray"/>
    <property type="resolution" value="2.95 A"/>
    <property type="chains" value="A/B/C/D=1-719"/>
</dbReference>
<dbReference type="PDB" id="6NSW">
    <property type="method" value="X-ray"/>
    <property type="resolution" value="2.10 A"/>
    <property type="chains" value="A/B/C/D=1-719"/>
</dbReference>
<dbReference type="PDB" id="6NSY">
    <property type="method" value="X-ray"/>
    <property type="resolution" value="2.20 A"/>
    <property type="chains" value="A/B/C/D=1-719"/>
</dbReference>
<dbReference type="PDB" id="6NSZ">
    <property type="method" value="X-ray"/>
    <property type="resolution" value="2.20 A"/>
    <property type="chains" value="A/B/C/D=1-719"/>
</dbReference>
<dbReference type="PDB" id="6NT0">
    <property type="method" value="X-ray"/>
    <property type="resolution" value="2.20 A"/>
    <property type="chains" value="A/B/C/D=1-719"/>
</dbReference>
<dbReference type="PDB" id="6NT1">
    <property type="method" value="X-ray"/>
    <property type="resolution" value="2.20 A"/>
    <property type="chains" value="A/B/C/D=1-719"/>
</dbReference>
<dbReference type="PDBsum" id="3EJ6"/>
<dbReference type="PDBsum" id="3ZJ4"/>
<dbReference type="PDBsum" id="3ZJ5"/>
<dbReference type="PDBsum" id="4AJ9"/>
<dbReference type="PDBsum" id="4BIM"/>
<dbReference type="PDBsum" id="6NSW"/>
<dbReference type="PDBsum" id="6NSY"/>
<dbReference type="PDBsum" id="6NSZ"/>
<dbReference type="PDBsum" id="6NT0"/>
<dbReference type="PDBsum" id="6NT1"/>
<dbReference type="SMR" id="Q9C169"/>
<dbReference type="IntAct" id="Q9C169">
    <property type="interactions" value="1"/>
</dbReference>
<dbReference type="MINT" id="Q9C169"/>
<dbReference type="STRING" id="367110.Q9C169"/>
<dbReference type="PeroxiBase" id="5416">
    <property type="entry name" value="NcKat03"/>
</dbReference>
<dbReference type="PaxDb" id="5141-EFNCRP00000000465"/>
<dbReference type="EnsemblFungi" id="EAA28590">
    <property type="protein sequence ID" value="EAA28590"/>
    <property type="gene ID" value="NCU00355"/>
</dbReference>
<dbReference type="GeneID" id="3873876"/>
<dbReference type="KEGG" id="ncr:NCU00355"/>
<dbReference type="VEuPathDB" id="FungiDB:NCU00355"/>
<dbReference type="HOGENOM" id="CLU_010645_3_0_1"/>
<dbReference type="InParanoid" id="Q9C169"/>
<dbReference type="OrthoDB" id="6880011at2759"/>
<dbReference type="EvolutionaryTrace" id="Q9C169"/>
<dbReference type="Proteomes" id="UP000001805">
    <property type="component" value="Chromosome 3, Linkage Group III"/>
</dbReference>
<dbReference type="GO" id="GO:0005829">
    <property type="term" value="C:cytosol"/>
    <property type="evidence" value="ECO:0000318"/>
    <property type="project" value="GO_Central"/>
</dbReference>
<dbReference type="GO" id="GO:0004096">
    <property type="term" value="F:catalase activity"/>
    <property type="evidence" value="ECO:0000318"/>
    <property type="project" value="GO_Central"/>
</dbReference>
<dbReference type="GO" id="GO:0020037">
    <property type="term" value="F:heme binding"/>
    <property type="evidence" value="ECO:0000318"/>
    <property type="project" value="GO_Central"/>
</dbReference>
<dbReference type="GO" id="GO:0046872">
    <property type="term" value="F:metal ion binding"/>
    <property type="evidence" value="ECO:0007669"/>
    <property type="project" value="UniProtKB-KW"/>
</dbReference>
<dbReference type="GO" id="GO:0042744">
    <property type="term" value="P:hydrogen peroxide catabolic process"/>
    <property type="evidence" value="ECO:0000318"/>
    <property type="project" value="GO_Central"/>
</dbReference>
<dbReference type="GO" id="GO:0006979">
    <property type="term" value="P:response to oxidative stress"/>
    <property type="evidence" value="ECO:0000318"/>
    <property type="project" value="GO_Central"/>
</dbReference>
<dbReference type="CDD" id="cd00328">
    <property type="entry name" value="catalase"/>
    <property type="match status" value="1"/>
</dbReference>
<dbReference type="CDD" id="cd03132">
    <property type="entry name" value="GATase1_catalase"/>
    <property type="match status" value="1"/>
</dbReference>
<dbReference type="FunFam" id="2.40.180.10:FF:000003">
    <property type="entry name" value="Catalase"/>
    <property type="match status" value="1"/>
</dbReference>
<dbReference type="FunFam" id="1.20.1370.20:FF:000001">
    <property type="entry name" value="Catalase HPII"/>
    <property type="match status" value="1"/>
</dbReference>
<dbReference type="FunFam" id="3.40.50.880:FF:000127">
    <property type="entry name" value="Catalase-3"/>
    <property type="match status" value="1"/>
</dbReference>
<dbReference type="Gene3D" id="1.20.1370.20">
    <property type="match status" value="1"/>
</dbReference>
<dbReference type="Gene3D" id="3.40.50.880">
    <property type="match status" value="1"/>
</dbReference>
<dbReference type="Gene3D" id="2.40.180.10">
    <property type="entry name" value="Catalase core domain"/>
    <property type="match status" value="1"/>
</dbReference>
<dbReference type="InterPro" id="IPR018028">
    <property type="entry name" value="Catalase"/>
</dbReference>
<dbReference type="InterPro" id="IPR024708">
    <property type="entry name" value="Catalase_AS"/>
</dbReference>
<dbReference type="InterPro" id="IPR024712">
    <property type="entry name" value="Catalase_clade2"/>
</dbReference>
<dbReference type="InterPro" id="IPR043156">
    <property type="entry name" value="Catalase_clade2_helical"/>
</dbReference>
<dbReference type="InterPro" id="IPR011614">
    <property type="entry name" value="Catalase_core"/>
</dbReference>
<dbReference type="InterPro" id="IPR010582">
    <property type="entry name" value="Catalase_immune_responsive"/>
</dbReference>
<dbReference type="InterPro" id="IPR041399">
    <property type="entry name" value="Catalase_large_C"/>
</dbReference>
<dbReference type="InterPro" id="IPR020835">
    <property type="entry name" value="Catalase_sf"/>
</dbReference>
<dbReference type="InterPro" id="IPR029062">
    <property type="entry name" value="Class_I_gatase-like"/>
</dbReference>
<dbReference type="PANTHER" id="PTHR42821">
    <property type="entry name" value="CATALASE"/>
    <property type="match status" value="1"/>
</dbReference>
<dbReference type="PANTHER" id="PTHR42821:SF3">
    <property type="entry name" value="CATALASE B"/>
    <property type="match status" value="1"/>
</dbReference>
<dbReference type="Pfam" id="PF00199">
    <property type="entry name" value="Catalase"/>
    <property type="match status" value="1"/>
</dbReference>
<dbReference type="Pfam" id="PF06628">
    <property type="entry name" value="Catalase-rel"/>
    <property type="match status" value="1"/>
</dbReference>
<dbReference type="Pfam" id="PF18011">
    <property type="entry name" value="Catalase_C"/>
    <property type="match status" value="1"/>
</dbReference>
<dbReference type="PIRSF" id="PIRSF038927">
    <property type="entry name" value="Catalase_clade2"/>
    <property type="match status" value="1"/>
</dbReference>
<dbReference type="PRINTS" id="PR00067">
    <property type="entry name" value="CATALASE"/>
</dbReference>
<dbReference type="SMART" id="SM01060">
    <property type="entry name" value="Catalase"/>
    <property type="match status" value="1"/>
</dbReference>
<dbReference type="SUPFAM" id="SSF56634">
    <property type="entry name" value="Heme-dependent catalase-like"/>
    <property type="match status" value="1"/>
</dbReference>
<dbReference type="PROSITE" id="PS00438">
    <property type="entry name" value="CATALASE_2"/>
    <property type="match status" value="1"/>
</dbReference>
<dbReference type="PROSITE" id="PS51402">
    <property type="entry name" value="CATALASE_3"/>
    <property type="match status" value="1"/>
</dbReference>
<name>CAT3_NEUCR</name>
<protein>
    <recommendedName>
        <fullName>Catalase-3</fullName>
        <ecNumber>1.11.1.6</ecNumber>
    </recommendedName>
</protein>
<feature type="signal peptide" evidence="2">
    <location>
        <begin position="1"/>
        <end position="18"/>
    </location>
</feature>
<feature type="propeptide" id="PRO_0000004687" evidence="4">
    <location>
        <begin position="19"/>
        <end position="30"/>
    </location>
</feature>
<feature type="chain" id="PRO_0000004688" description="Catalase-3">
    <location>
        <begin position="31"/>
        <end position="719"/>
    </location>
</feature>
<feature type="active site" evidence="3">
    <location>
        <position position="102"/>
    </location>
</feature>
<feature type="active site" evidence="3">
    <location>
        <position position="175"/>
    </location>
</feature>
<feature type="binding site" description="axial binding residue" evidence="1">
    <location>
        <position position="389"/>
    </location>
    <ligand>
        <name>heme</name>
        <dbReference type="ChEBI" id="CHEBI:30413"/>
    </ligand>
    <ligandPart>
        <name>Fe</name>
        <dbReference type="ChEBI" id="CHEBI:18248"/>
    </ligandPart>
</feature>
<feature type="helix" evidence="9">
    <location>
        <begin position="41"/>
        <end position="46"/>
    </location>
</feature>
<feature type="strand" evidence="9">
    <location>
        <begin position="70"/>
        <end position="72"/>
    </location>
</feature>
<feature type="helix" evidence="9">
    <location>
        <begin position="82"/>
        <end position="92"/>
    </location>
</feature>
<feature type="strand" evidence="7">
    <location>
        <begin position="100"/>
        <end position="102"/>
    </location>
</feature>
<feature type="strand" evidence="9">
    <location>
        <begin position="104"/>
        <end position="116"/>
    </location>
</feature>
<feature type="turn" evidence="9">
    <location>
        <begin position="119"/>
        <end position="121"/>
    </location>
</feature>
<feature type="helix" evidence="9">
    <location>
        <begin position="125"/>
        <end position="127"/>
    </location>
</feature>
<feature type="strand" evidence="9">
    <location>
        <begin position="133"/>
        <end position="141"/>
    </location>
</feature>
<feature type="strand" evidence="9">
    <location>
        <begin position="143"/>
        <end position="145"/>
    </location>
</feature>
<feature type="strand" evidence="8">
    <location>
        <begin position="153"/>
        <end position="155"/>
    </location>
</feature>
<feature type="strand" evidence="9">
    <location>
        <begin position="158"/>
        <end position="165"/>
    </location>
</feature>
<feature type="strand" evidence="9">
    <location>
        <begin position="168"/>
        <end position="179"/>
    </location>
</feature>
<feature type="helix" evidence="9">
    <location>
        <begin position="185"/>
        <end position="187"/>
    </location>
</feature>
<feature type="helix" evidence="9">
    <location>
        <begin position="188"/>
        <end position="195"/>
    </location>
</feature>
<feature type="turn" evidence="9">
    <location>
        <begin position="199"/>
        <end position="201"/>
    </location>
</feature>
<feature type="strand" evidence="11">
    <location>
        <begin position="204"/>
        <end position="206"/>
    </location>
</feature>
<feature type="helix" evidence="9">
    <location>
        <begin position="211"/>
        <end position="219"/>
    </location>
</feature>
<feature type="helix" evidence="9">
    <location>
        <begin position="221"/>
        <end position="223"/>
    </location>
</feature>
<feature type="helix" evidence="9">
    <location>
        <begin position="224"/>
        <end position="230"/>
    </location>
</feature>
<feature type="helix" evidence="9">
    <location>
        <begin position="233"/>
        <end position="235"/>
    </location>
</feature>
<feature type="strand" evidence="9">
    <location>
        <begin position="236"/>
        <end position="238"/>
    </location>
</feature>
<feature type="helix" evidence="9">
    <location>
        <begin position="240"/>
        <end position="242"/>
    </location>
</feature>
<feature type="strand" evidence="9">
    <location>
        <begin position="251"/>
        <end position="254"/>
    </location>
</feature>
<feature type="strand" evidence="9">
    <location>
        <begin position="260"/>
        <end position="271"/>
    </location>
</feature>
<feature type="helix" evidence="9">
    <location>
        <begin position="278"/>
        <end position="287"/>
    </location>
</feature>
<feature type="helix" evidence="9">
    <location>
        <begin position="291"/>
        <end position="301"/>
    </location>
</feature>
<feature type="strand" evidence="9">
    <location>
        <begin position="307"/>
        <end position="315"/>
    </location>
</feature>
<feature type="helix" evidence="9">
    <location>
        <begin position="317"/>
        <end position="319"/>
    </location>
</feature>
<feature type="strand" evidence="9">
    <location>
        <begin position="323"/>
        <end position="325"/>
    </location>
</feature>
<feature type="turn" evidence="9">
    <location>
        <begin position="336"/>
        <end position="338"/>
    </location>
</feature>
<feature type="strand" evidence="9">
    <location>
        <begin position="342"/>
        <end position="351"/>
    </location>
</feature>
<feature type="helix" evidence="9">
    <location>
        <begin position="356"/>
        <end position="359"/>
    </location>
</feature>
<feature type="turn" evidence="9">
    <location>
        <begin position="360"/>
        <end position="362"/>
    </location>
</feature>
<feature type="helix" evidence="9">
    <location>
        <begin position="380"/>
        <end position="397"/>
    </location>
</feature>
<feature type="strand" evidence="9">
    <location>
        <begin position="398"/>
        <end position="400"/>
    </location>
</feature>
<feature type="helix" evidence="9">
    <location>
        <begin position="402"/>
        <end position="404"/>
    </location>
</feature>
<feature type="turn" evidence="9">
    <location>
        <begin position="406"/>
        <end position="408"/>
    </location>
</feature>
<feature type="strand" evidence="7">
    <location>
        <begin position="427"/>
        <end position="429"/>
    </location>
</feature>
<feature type="strand" evidence="9">
    <location>
        <begin position="434"/>
        <end position="436"/>
    </location>
</feature>
<feature type="turn" evidence="9">
    <location>
        <begin position="438"/>
        <end position="442"/>
    </location>
</feature>
<feature type="strand" evidence="9">
    <location>
        <begin position="449"/>
        <end position="451"/>
    </location>
</feature>
<feature type="strand" evidence="9">
    <location>
        <begin position="462"/>
        <end position="469"/>
    </location>
</feature>
<feature type="helix" evidence="9">
    <location>
        <begin position="473"/>
        <end position="475"/>
    </location>
</feature>
<feature type="helix" evidence="9">
    <location>
        <begin position="480"/>
        <end position="487"/>
    </location>
</feature>
<feature type="helix" evidence="9">
    <location>
        <begin position="491"/>
        <end position="505"/>
    </location>
</feature>
<feature type="helix" evidence="9">
    <location>
        <begin position="511"/>
        <end position="524"/>
    </location>
</feature>
<feature type="helix" evidence="9">
    <location>
        <begin position="526"/>
        <end position="536"/>
    </location>
</feature>
<feature type="helix" evidence="9">
    <location>
        <begin position="545"/>
        <end position="547"/>
    </location>
</feature>
<feature type="strand" evidence="6">
    <location>
        <begin position="558"/>
        <end position="561"/>
    </location>
</feature>
<feature type="strand" evidence="9">
    <location>
        <begin position="570"/>
        <end position="574"/>
    </location>
</feature>
<feature type="strand" evidence="6">
    <location>
        <begin position="577"/>
        <end position="580"/>
    </location>
</feature>
<feature type="helix" evidence="9">
    <location>
        <begin position="581"/>
        <end position="593"/>
    </location>
</feature>
<feature type="turn" evidence="9">
    <location>
        <begin position="594"/>
        <end position="596"/>
    </location>
</feature>
<feature type="strand" evidence="9">
    <location>
        <begin position="598"/>
        <end position="605"/>
    </location>
</feature>
<feature type="strand" evidence="10">
    <location>
        <begin position="611"/>
        <end position="613"/>
    </location>
</feature>
<feature type="turn" evidence="9">
    <location>
        <begin position="614"/>
        <end position="616"/>
    </location>
</feature>
<feature type="helix" evidence="9">
    <location>
        <begin position="619"/>
        <end position="621"/>
    </location>
</feature>
<feature type="strand" evidence="9">
    <location>
        <begin position="623"/>
        <end position="627"/>
    </location>
</feature>
<feature type="helix" evidence="9">
    <location>
        <begin position="631"/>
        <end position="635"/>
    </location>
</feature>
<feature type="helix" evidence="9">
    <location>
        <begin position="637"/>
        <end position="640"/>
    </location>
</feature>
<feature type="helix" evidence="9">
    <location>
        <begin position="649"/>
        <end position="659"/>
    </location>
</feature>
<feature type="strand" evidence="9">
    <location>
        <begin position="664"/>
        <end position="667"/>
    </location>
</feature>
<feature type="helix" evidence="9">
    <location>
        <begin position="668"/>
        <end position="670"/>
    </location>
</feature>
<feature type="helix" evidence="9">
    <location>
        <begin position="671"/>
        <end position="676"/>
    </location>
</feature>
<feature type="strand" evidence="6">
    <location>
        <begin position="681"/>
        <end position="683"/>
    </location>
</feature>
<feature type="strand" evidence="9">
    <location>
        <begin position="686"/>
        <end position="690"/>
    </location>
</feature>
<feature type="helix" evidence="9">
    <location>
        <begin position="691"/>
        <end position="704"/>
    </location>
</feature>
<feature type="helix" evidence="9">
    <location>
        <begin position="708"/>
        <end position="710"/>
    </location>
</feature>
<feature type="turn" evidence="11">
    <location>
        <begin position="714"/>
        <end position="717"/>
    </location>
</feature>
<comment type="function">
    <text evidence="1">Occurs in almost all aerobically respiring organisms and serves to protect cells from the toxic effects of hydrogen peroxide.</text>
</comment>
<comment type="catalytic activity">
    <reaction evidence="3 4">
        <text>2 H2O2 = O2 + 2 H2O</text>
        <dbReference type="Rhea" id="RHEA:20309"/>
        <dbReference type="ChEBI" id="CHEBI:15377"/>
        <dbReference type="ChEBI" id="CHEBI:15379"/>
        <dbReference type="ChEBI" id="CHEBI:16240"/>
        <dbReference type="EC" id="1.11.1.6"/>
    </reaction>
</comment>
<comment type="cofactor">
    <cofactor>
        <name>heme</name>
        <dbReference type="ChEBI" id="CHEBI:30413"/>
    </cofactor>
</comment>
<comment type="developmental stage">
    <text evidence="4">Activity is predominant during late exponential growth and at the start of the conidiation process.</text>
</comment>
<comment type="induction">
    <text evidence="4">Induced under stress conditions, such as H(2)O(2), paraquat, cadmium, heat shock, uric acid and nitrate treatment.</text>
</comment>
<comment type="similarity">
    <text evidence="5">Belongs to the catalase family.</text>
</comment>
<accession>Q9C169</accession>
<accession>Q7RV04</accession>
<reference key="1">
    <citation type="journal article" date="2002" name="Free Radic. Biol. Med.">
        <title>Regulation and oxidation of two large monofunctional catalases.</title>
        <authorList>
            <person name="Michan S."/>
            <person name="Lledias F."/>
            <person name="Baldwin J.D."/>
            <person name="Natvig D.O."/>
            <person name="Hansberg W."/>
        </authorList>
    </citation>
    <scope>NUCLEOTIDE SEQUENCE [GENOMIC DNA]</scope>
    <scope>PROTEIN SEQUENCE OF 31-58 AND 638-656</scope>
    <scope>CATALYTIC ACTIVITY</scope>
    <scope>DEVELOPMENTAL STAGE</scope>
    <scope>INDUCTION</scope>
    <source>
        <strain>74-ORS23-1A</strain>
        <tissue>Mycelium</tissue>
    </source>
</reference>
<reference key="2">
    <citation type="journal article" date="2003" name="Nature">
        <title>The genome sequence of the filamentous fungus Neurospora crassa.</title>
        <authorList>
            <person name="Galagan J.E."/>
            <person name="Calvo S.E."/>
            <person name="Borkovich K.A."/>
            <person name="Selker E.U."/>
            <person name="Read N.D."/>
            <person name="Jaffe D.B."/>
            <person name="FitzHugh W."/>
            <person name="Ma L.-J."/>
            <person name="Smirnov S."/>
            <person name="Purcell S."/>
            <person name="Rehman B."/>
            <person name="Elkins T."/>
            <person name="Engels R."/>
            <person name="Wang S."/>
            <person name="Nielsen C.B."/>
            <person name="Butler J."/>
            <person name="Endrizzi M."/>
            <person name="Qui D."/>
            <person name="Ianakiev P."/>
            <person name="Bell-Pedersen D."/>
            <person name="Nelson M.A."/>
            <person name="Werner-Washburne M."/>
            <person name="Selitrennikoff C.P."/>
            <person name="Kinsey J.A."/>
            <person name="Braun E.L."/>
            <person name="Zelter A."/>
            <person name="Schulte U."/>
            <person name="Kothe G.O."/>
            <person name="Jedd G."/>
            <person name="Mewes H.-W."/>
            <person name="Staben C."/>
            <person name="Marcotte E."/>
            <person name="Greenberg D."/>
            <person name="Roy A."/>
            <person name="Foley K."/>
            <person name="Naylor J."/>
            <person name="Stange-Thomann N."/>
            <person name="Barrett R."/>
            <person name="Gnerre S."/>
            <person name="Kamal M."/>
            <person name="Kamvysselis M."/>
            <person name="Mauceli E.W."/>
            <person name="Bielke C."/>
            <person name="Rudd S."/>
            <person name="Frishman D."/>
            <person name="Krystofova S."/>
            <person name="Rasmussen C."/>
            <person name="Metzenberg R.L."/>
            <person name="Perkins D.D."/>
            <person name="Kroken S."/>
            <person name="Cogoni C."/>
            <person name="Macino G."/>
            <person name="Catcheside D.E.A."/>
            <person name="Li W."/>
            <person name="Pratt R.J."/>
            <person name="Osmani S.A."/>
            <person name="DeSouza C.P.C."/>
            <person name="Glass N.L."/>
            <person name="Orbach M.J."/>
            <person name="Berglund J.A."/>
            <person name="Voelker R."/>
            <person name="Yarden O."/>
            <person name="Plamann M."/>
            <person name="Seiler S."/>
            <person name="Dunlap J.C."/>
            <person name="Radford A."/>
            <person name="Aramayo R."/>
            <person name="Natvig D.O."/>
            <person name="Alex L.A."/>
            <person name="Mannhaupt G."/>
            <person name="Ebbole D.J."/>
            <person name="Freitag M."/>
            <person name="Paulsen I."/>
            <person name="Sachs M.S."/>
            <person name="Lander E.S."/>
            <person name="Nusbaum C."/>
            <person name="Birren B.W."/>
        </authorList>
    </citation>
    <scope>NUCLEOTIDE SEQUENCE [LARGE SCALE GENOMIC DNA]</scope>
    <source>
        <strain>ATCC 24698 / 74-OR23-1A / CBS 708.71 / DSM 1257 / FGSC 987</strain>
    </source>
</reference>